<reference key="1">
    <citation type="journal article" date="1991" name="Mol. Microbiol.">
        <title>Molecular analysis of the virulence locus of the Salmonella dublin plasmid pSDL2.</title>
        <authorList>
            <person name="Krause M."/>
            <person name="Roudier C."/>
            <person name="Fierer J."/>
            <person name="Harwood J."/>
            <person name="Guiney D."/>
        </authorList>
    </citation>
    <scope>NUCLEOTIDE SEQUENCE [GENOMIC DNA]</scope>
    <source>
        <strain>Lane</strain>
    </source>
</reference>
<reference key="2">
    <citation type="journal article" date="1992" name="J. Bacteriol.">
        <title>Characterization of translation termination mutations in the spv operon of the Salmonella virulence plasmid pSDL2.</title>
        <authorList>
            <person name="Roudier C."/>
            <person name="Fierer J."/>
            <person name="Guiney D.G."/>
        </authorList>
    </citation>
    <scope>DISRUPTION PHENOTYPE UPON MOUSE INFECTION</scope>
    <source>
        <strain>Lane</strain>
    </source>
</reference>
<sequence length="241" mass="27646">MPINRPNLNLNIPPLNIVAAYDGAEIPSTNKHLKNNFNSLHNQMRKMPVSHFKEALDVPDYSGMRQSGFFAMSQGFQLNNHGYDVFIHARRESPQSQGKFAGDKFHISVLRDMVPQAFQALSGLLFSEDSPVDKWKVTDMEKVVQQARVSLGAQFTLYIKPDQENSQYSASFLHKTRQFIECLESRLSENGVISGQCPESDVHPENWKYLSYRNELRSGRDGGEMQRQALREEPFYRLMTE</sequence>
<dbReference type="EC" id="4.2.3.-"/>
<dbReference type="EMBL" id="X56727">
    <property type="protein sequence ID" value="CAA40050.1"/>
    <property type="molecule type" value="Genomic_DNA"/>
</dbReference>
<dbReference type="RefSeq" id="WP_001122242.1">
    <property type="nucleotide sequence ID" value="NZ_VDCP01000013.1"/>
</dbReference>
<dbReference type="RefSeq" id="YP_001716114.1">
    <property type="nucleotide sequence ID" value="NC_010422.1"/>
</dbReference>
<dbReference type="RefSeq" id="YP_003264391.1">
    <property type="nucleotide sequence ID" value="NC_013437.1"/>
</dbReference>
<dbReference type="RefSeq" id="YP_003864188.1">
    <property type="nucleotide sequence ID" value="NC_014476.2"/>
</dbReference>
<dbReference type="RefSeq" id="YP_006954899.1">
    <property type="nucleotide sequence ID" value="NC_019106.1"/>
</dbReference>
<dbReference type="RefSeq" id="YP_006955267.1">
    <property type="nucleotide sequence ID" value="NC_019108.1"/>
</dbReference>
<dbReference type="RefSeq" id="YP_006955407.1">
    <property type="nucleotide sequence ID" value="NC_019109.1"/>
</dbReference>
<dbReference type="RefSeq" id="YP_006955574.1">
    <property type="nucleotide sequence ID" value="NC_019001.1"/>
</dbReference>
<dbReference type="SMR" id="P0A2N0"/>
<dbReference type="PHI-base" id="PHI:4517"/>
<dbReference type="GO" id="GO:0005576">
    <property type="term" value="C:extracellular region"/>
    <property type="evidence" value="ECO:0007669"/>
    <property type="project" value="UniProtKB-SubCell"/>
</dbReference>
<dbReference type="GO" id="GO:0016829">
    <property type="term" value="F:lyase activity"/>
    <property type="evidence" value="ECO:0007669"/>
    <property type="project" value="UniProtKB-KW"/>
</dbReference>
<dbReference type="Gene3D" id="3.30.2430.10">
    <property type="entry name" value="phosphothreonine lyase"/>
    <property type="match status" value="1"/>
</dbReference>
<dbReference type="InterPro" id="IPR003519">
    <property type="entry name" value="OspF/SpvC"/>
</dbReference>
<dbReference type="InterPro" id="IPR038498">
    <property type="entry name" value="OspF/SpvC_sf"/>
</dbReference>
<dbReference type="NCBIfam" id="NF011781">
    <property type="entry name" value="PRK15245.1"/>
    <property type="match status" value="1"/>
</dbReference>
<dbReference type="Pfam" id="PF03536">
    <property type="entry name" value="VRP3"/>
    <property type="match status" value="1"/>
</dbReference>
<dbReference type="PRINTS" id="PR01342">
    <property type="entry name" value="SALVRPPROT"/>
</dbReference>
<name>SPVC_SALDU</name>
<geneLocation type="plasmid">
    <name>pSDL2</name>
</geneLocation>
<comment type="function">
    <text evidence="1">Secreted effector that irreversibly inactivates host MAP kinases by catalyzing the dephosphorylation of the phosphothreonine residue in the pT-X-pY motif present in MAPKs, via a beta-elimination reaction leading to a dehydrobutyrine residue.</text>
</comment>
<comment type="subcellular location">
    <subcellularLocation>
        <location evidence="1">Secreted</location>
    </subcellularLocation>
</comment>
<comment type="disruption phenotype">
    <text evidence="2">Decreased virulence in mice.</text>
</comment>
<comment type="miscellaneous">
    <text>In Salmonella spp. the spv gene cluster is encoded on a highly transmissible plasmid.</text>
</comment>
<comment type="similarity">
    <text evidence="3">Belongs to the phosphothreonine lyase family.</text>
</comment>
<feature type="initiator methionine" description="Removed" evidence="1">
    <location>
        <position position="1"/>
    </location>
</feature>
<feature type="chain" id="PRO_0000221669" description="MAPK phosphothreonine lyase">
    <location>
        <begin position="2"/>
        <end position="241"/>
    </location>
</feature>
<feature type="active site" description="Proton donor" evidence="1">
    <location>
        <position position="106"/>
    </location>
</feature>
<feature type="active site" description="Proton acceptor" evidence="1">
    <location>
        <position position="136"/>
    </location>
</feature>
<gene>
    <name type="primary">spvC</name>
    <name type="synonym">mkaD</name>
    <name type="synonym">vsdD</name>
</gene>
<protein>
    <recommendedName>
        <fullName>MAPK phosphothreonine lyase</fullName>
        <ecNumber>4.2.3.-</ecNumber>
    </recommendedName>
    <alternativeName>
        <fullName>27.5 kDa virulence protein</fullName>
    </alternativeName>
    <alternativeName>
        <fullName>Secreted effector protein SpvC</fullName>
    </alternativeName>
    <alternativeName>
        <fullName>Virulence protein SpvC</fullName>
    </alternativeName>
</protein>
<keyword id="KW-0456">Lyase</keyword>
<keyword id="KW-0614">Plasmid</keyword>
<keyword id="KW-0964">Secreted</keyword>
<keyword id="KW-0843">Virulence</keyword>
<proteinExistence type="inferred from homology"/>
<accession>P0A2N0</accession>
<accession>P21456</accession>
<evidence type="ECO:0000250" key="1"/>
<evidence type="ECO:0000269" key="2">
    <source>
    </source>
</evidence>
<evidence type="ECO:0000305" key="3"/>
<organism>
    <name type="scientific">Salmonella dublin</name>
    <dbReference type="NCBI Taxonomy" id="98360"/>
    <lineage>
        <taxon>Bacteria</taxon>
        <taxon>Pseudomonadati</taxon>
        <taxon>Pseudomonadota</taxon>
        <taxon>Gammaproteobacteria</taxon>
        <taxon>Enterobacterales</taxon>
        <taxon>Enterobacteriaceae</taxon>
        <taxon>Salmonella</taxon>
    </lineage>
</organism>